<reference key="1">
    <citation type="journal article" date="1996" name="Microbiology">
        <title>Systematic sequencing of the 283 kb 210 degrees-232 degrees region of the Bacillus subtilis genome containing the skin element and many sporulation genes.</title>
        <authorList>
            <person name="Mizuno M."/>
            <person name="Masuda S."/>
            <person name="Takemaru K."/>
            <person name="Hosono S."/>
            <person name="Sato T."/>
            <person name="Takeuchi M."/>
            <person name="Kobayashi Y."/>
        </authorList>
    </citation>
    <scope>NUCLEOTIDE SEQUENCE [GENOMIC DNA]</scope>
    <source>
        <strain>168 / JH642</strain>
    </source>
</reference>
<reference key="2">
    <citation type="journal article" date="1997" name="Nature">
        <title>The complete genome sequence of the Gram-positive bacterium Bacillus subtilis.</title>
        <authorList>
            <person name="Kunst F."/>
            <person name="Ogasawara N."/>
            <person name="Moszer I."/>
            <person name="Albertini A.M."/>
            <person name="Alloni G."/>
            <person name="Azevedo V."/>
            <person name="Bertero M.G."/>
            <person name="Bessieres P."/>
            <person name="Bolotin A."/>
            <person name="Borchert S."/>
            <person name="Borriss R."/>
            <person name="Boursier L."/>
            <person name="Brans A."/>
            <person name="Braun M."/>
            <person name="Brignell S.C."/>
            <person name="Bron S."/>
            <person name="Brouillet S."/>
            <person name="Bruschi C.V."/>
            <person name="Caldwell B."/>
            <person name="Capuano V."/>
            <person name="Carter N.M."/>
            <person name="Choi S.-K."/>
            <person name="Codani J.-J."/>
            <person name="Connerton I.F."/>
            <person name="Cummings N.J."/>
            <person name="Daniel R.A."/>
            <person name="Denizot F."/>
            <person name="Devine K.M."/>
            <person name="Duesterhoeft A."/>
            <person name="Ehrlich S.D."/>
            <person name="Emmerson P.T."/>
            <person name="Entian K.-D."/>
            <person name="Errington J."/>
            <person name="Fabret C."/>
            <person name="Ferrari E."/>
            <person name="Foulger D."/>
            <person name="Fritz C."/>
            <person name="Fujita M."/>
            <person name="Fujita Y."/>
            <person name="Fuma S."/>
            <person name="Galizzi A."/>
            <person name="Galleron N."/>
            <person name="Ghim S.-Y."/>
            <person name="Glaser P."/>
            <person name="Goffeau A."/>
            <person name="Golightly E.J."/>
            <person name="Grandi G."/>
            <person name="Guiseppi G."/>
            <person name="Guy B.J."/>
            <person name="Haga K."/>
            <person name="Haiech J."/>
            <person name="Harwood C.R."/>
            <person name="Henaut A."/>
            <person name="Hilbert H."/>
            <person name="Holsappel S."/>
            <person name="Hosono S."/>
            <person name="Hullo M.-F."/>
            <person name="Itaya M."/>
            <person name="Jones L.-M."/>
            <person name="Joris B."/>
            <person name="Karamata D."/>
            <person name="Kasahara Y."/>
            <person name="Klaerr-Blanchard M."/>
            <person name="Klein C."/>
            <person name="Kobayashi Y."/>
            <person name="Koetter P."/>
            <person name="Koningstein G."/>
            <person name="Krogh S."/>
            <person name="Kumano M."/>
            <person name="Kurita K."/>
            <person name="Lapidus A."/>
            <person name="Lardinois S."/>
            <person name="Lauber J."/>
            <person name="Lazarevic V."/>
            <person name="Lee S.-M."/>
            <person name="Levine A."/>
            <person name="Liu H."/>
            <person name="Masuda S."/>
            <person name="Mauel C."/>
            <person name="Medigue C."/>
            <person name="Medina N."/>
            <person name="Mellado R.P."/>
            <person name="Mizuno M."/>
            <person name="Moestl D."/>
            <person name="Nakai S."/>
            <person name="Noback M."/>
            <person name="Noone D."/>
            <person name="O'Reilly M."/>
            <person name="Ogawa K."/>
            <person name="Ogiwara A."/>
            <person name="Oudega B."/>
            <person name="Park S.-H."/>
            <person name="Parro V."/>
            <person name="Pohl T.M."/>
            <person name="Portetelle D."/>
            <person name="Porwollik S."/>
            <person name="Prescott A.M."/>
            <person name="Presecan E."/>
            <person name="Pujic P."/>
            <person name="Purnelle B."/>
            <person name="Rapoport G."/>
            <person name="Rey M."/>
            <person name="Reynolds S."/>
            <person name="Rieger M."/>
            <person name="Rivolta C."/>
            <person name="Rocha E."/>
            <person name="Roche B."/>
            <person name="Rose M."/>
            <person name="Sadaie Y."/>
            <person name="Sato T."/>
            <person name="Scanlan E."/>
            <person name="Schleich S."/>
            <person name="Schroeter R."/>
            <person name="Scoffone F."/>
            <person name="Sekiguchi J."/>
            <person name="Sekowska A."/>
            <person name="Seror S.J."/>
            <person name="Serror P."/>
            <person name="Shin B.-S."/>
            <person name="Soldo B."/>
            <person name="Sorokin A."/>
            <person name="Tacconi E."/>
            <person name="Takagi T."/>
            <person name="Takahashi H."/>
            <person name="Takemaru K."/>
            <person name="Takeuchi M."/>
            <person name="Tamakoshi A."/>
            <person name="Tanaka T."/>
            <person name="Terpstra P."/>
            <person name="Tognoni A."/>
            <person name="Tosato V."/>
            <person name="Uchiyama S."/>
            <person name="Vandenbol M."/>
            <person name="Vannier F."/>
            <person name="Vassarotti A."/>
            <person name="Viari A."/>
            <person name="Wambutt R."/>
            <person name="Wedler E."/>
            <person name="Wedler H."/>
            <person name="Weitzenegger T."/>
            <person name="Winters P."/>
            <person name="Wipat A."/>
            <person name="Yamamoto H."/>
            <person name="Yamane K."/>
            <person name="Yasumoto K."/>
            <person name="Yata K."/>
            <person name="Yoshida K."/>
            <person name="Yoshikawa H.-F."/>
            <person name="Zumstein E."/>
            <person name="Yoshikawa H."/>
            <person name="Danchin A."/>
        </authorList>
    </citation>
    <scope>NUCLEOTIDE SEQUENCE [LARGE SCALE GENOMIC DNA]</scope>
    <source>
        <strain>168</strain>
    </source>
</reference>
<reference key="3">
    <citation type="journal article" date="2001" name="Genome Biol.">
        <title>Extracting biological information from DNA arrays: an unexpected link between arginine and methionine metabolism in Bacillus subtilis.</title>
        <authorList>
            <person name="Sekowska A."/>
            <person name="Robin S."/>
            <person name="Daudin J.-J."/>
            <person name="Henaut A."/>
            <person name="Danchin A."/>
        </authorList>
    </citation>
    <scope>FUNCTION IN ARGININE TRANSPORT</scope>
    <scope>DISRUPTION PHENOTYPE</scope>
    <source>
        <strain>168</strain>
    </source>
</reference>
<dbReference type="EMBL" id="D84432">
    <property type="protein sequence ID" value="BAA12606.1"/>
    <property type="molecule type" value="Genomic_DNA"/>
</dbReference>
<dbReference type="EMBL" id="AL009126">
    <property type="protein sequence ID" value="CAB14327.1"/>
    <property type="molecule type" value="Genomic_DNA"/>
</dbReference>
<dbReference type="PIR" id="H69962">
    <property type="entry name" value="H69962"/>
</dbReference>
<dbReference type="SMR" id="P54537"/>
<dbReference type="FunCoup" id="P54537">
    <property type="interactions" value="618"/>
</dbReference>
<dbReference type="STRING" id="224308.BSU23960"/>
<dbReference type="TCDB" id="3.A.1.3.15">
    <property type="family name" value="the atp-binding cassette (abc) superfamily"/>
</dbReference>
<dbReference type="PaxDb" id="224308-BSU23960"/>
<dbReference type="EnsemblBacteria" id="CAB14327">
    <property type="protein sequence ID" value="CAB14327"/>
    <property type="gene ID" value="BSU_23960"/>
</dbReference>
<dbReference type="GeneID" id="938686"/>
<dbReference type="KEGG" id="bsu:BSU23960"/>
<dbReference type="PATRIC" id="fig|224308.179.peg.2610"/>
<dbReference type="eggNOG" id="COG1126">
    <property type="taxonomic scope" value="Bacteria"/>
</dbReference>
<dbReference type="InParanoid" id="P54537"/>
<dbReference type="OrthoDB" id="9802185at2"/>
<dbReference type="PhylomeDB" id="P54537"/>
<dbReference type="BioCyc" id="BSUB:BSU23960-MONOMER"/>
<dbReference type="Proteomes" id="UP000001570">
    <property type="component" value="Chromosome"/>
</dbReference>
<dbReference type="GO" id="GO:0005886">
    <property type="term" value="C:plasma membrane"/>
    <property type="evidence" value="ECO:0007669"/>
    <property type="project" value="UniProtKB-SubCell"/>
</dbReference>
<dbReference type="GO" id="GO:0015424">
    <property type="term" value="F:ABC-type amino acid transporter activity"/>
    <property type="evidence" value="ECO:0007669"/>
    <property type="project" value="InterPro"/>
</dbReference>
<dbReference type="GO" id="GO:0005524">
    <property type="term" value="F:ATP binding"/>
    <property type="evidence" value="ECO:0007669"/>
    <property type="project" value="UniProtKB-KW"/>
</dbReference>
<dbReference type="GO" id="GO:0016887">
    <property type="term" value="F:ATP hydrolysis activity"/>
    <property type="evidence" value="ECO:0007669"/>
    <property type="project" value="InterPro"/>
</dbReference>
<dbReference type="CDD" id="cd03262">
    <property type="entry name" value="ABC_HisP_GlnQ"/>
    <property type="match status" value="1"/>
</dbReference>
<dbReference type="FunFam" id="3.40.50.300:FF:000020">
    <property type="entry name" value="Amino acid ABC transporter ATP-binding component"/>
    <property type="match status" value="1"/>
</dbReference>
<dbReference type="Gene3D" id="3.40.50.300">
    <property type="entry name" value="P-loop containing nucleotide triphosphate hydrolases"/>
    <property type="match status" value="1"/>
</dbReference>
<dbReference type="InterPro" id="IPR003593">
    <property type="entry name" value="AAA+_ATPase"/>
</dbReference>
<dbReference type="InterPro" id="IPR030679">
    <property type="entry name" value="ABC_ATPase_HisP-typ"/>
</dbReference>
<dbReference type="InterPro" id="IPR003439">
    <property type="entry name" value="ABC_transporter-like_ATP-bd"/>
</dbReference>
<dbReference type="InterPro" id="IPR017871">
    <property type="entry name" value="ABC_transporter-like_CS"/>
</dbReference>
<dbReference type="InterPro" id="IPR050086">
    <property type="entry name" value="MetN_ABC_transporter-like"/>
</dbReference>
<dbReference type="InterPro" id="IPR027417">
    <property type="entry name" value="P-loop_NTPase"/>
</dbReference>
<dbReference type="PANTHER" id="PTHR43166">
    <property type="entry name" value="AMINO ACID IMPORT ATP-BINDING PROTEIN"/>
    <property type="match status" value="1"/>
</dbReference>
<dbReference type="PANTHER" id="PTHR43166:SF37">
    <property type="entry name" value="ARGININE TRANSPORT ATP-BINDING PROTEIN ARTM"/>
    <property type="match status" value="1"/>
</dbReference>
<dbReference type="Pfam" id="PF00005">
    <property type="entry name" value="ABC_tran"/>
    <property type="match status" value="1"/>
</dbReference>
<dbReference type="PIRSF" id="PIRSF039085">
    <property type="entry name" value="ABC_ATPase_HisP"/>
    <property type="match status" value="1"/>
</dbReference>
<dbReference type="SMART" id="SM00382">
    <property type="entry name" value="AAA"/>
    <property type="match status" value="1"/>
</dbReference>
<dbReference type="SUPFAM" id="SSF52540">
    <property type="entry name" value="P-loop containing nucleoside triphosphate hydrolases"/>
    <property type="match status" value="1"/>
</dbReference>
<dbReference type="PROSITE" id="PS00211">
    <property type="entry name" value="ABC_TRANSPORTER_1"/>
    <property type="match status" value="1"/>
</dbReference>
<dbReference type="PROSITE" id="PS50893">
    <property type="entry name" value="ABC_TRANSPORTER_2"/>
    <property type="match status" value="1"/>
</dbReference>
<evidence type="ECO:0000255" key="1">
    <source>
        <dbReference type="PROSITE-ProRule" id="PRU00434"/>
    </source>
</evidence>
<evidence type="ECO:0000269" key="2">
    <source>
    </source>
</evidence>
<evidence type="ECO:0000305" key="3"/>
<protein>
    <recommendedName>
        <fullName>Arginine transport ATP-binding protein ArtM</fullName>
    </recommendedName>
</protein>
<accession>P54537</accession>
<name>ARTM_BACSU</name>
<sequence length="240" mass="26950">MIKVEKLSKSFGKHEVLKNISTTIAEGEVVAVIGPSGSGKSTFLRCLNLLEKPNGGTITIKDTEITKPKTNTLKVRENIGMVFQHFHLFPHKTVLENIMYAPVNVKKESKQAAQEKAEDLLRKVGLFEKRNDYPNRLSGGQKQRVAIARALAMNPDIMLFDEPTSALDPEMVKEVLQVMKELVETGMTMVIVTHEMGFAKEVADRVLFMDQGMIVEDGNPKEFFMSPKSKRAQDFLEKIL</sequence>
<feature type="chain" id="PRO_0000093144" description="Arginine transport ATP-binding protein ArtM">
    <location>
        <begin position="1"/>
        <end position="240"/>
    </location>
</feature>
<feature type="domain" description="ABC transporter" evidence="1">
    <location>
        <begin position="2"/>
        <end position="236"/>
    </location>
</feature>
<feature type="binding site" evidence="1">
    <location>
        <begin position="34"/>
        <end position="41"/>
    </location>
    <ligand>
        <name>ATP</name>
        <dbReference type="ChEBI" id="CHEBI:30616"/>
    </ligand>
</feature>
<comment type="function">
    <text evidence="2">Part of a binding-protein-dependent transport system for arginine. Probably responsible for energy coupling to the transport system.</text>
</comment>
<comment type="subcellular location">
    <subcellularLocation>
        <location evidence="3">Cell membrane</location>
        <topology evidence="3">Peripheral membrane protein</topology>
    </subcellularLocation>
</comment>
<comment type="disruption phenotype">
    <text evidence="2">Impaired growth on arginine as the nitrogen source.</text>
</comment>
<comment type="similarity">
    <text evidence="3">Belongs to the ABC transporter superfamily.</text>
</comment>
<gene>
    <name type="primary">artM</name>
    <name type="synonym">yqiZ</name>
    <name type="ordered locus">BSU23960</name>
</gene>
<organism>
    <name type="scientific">Bacillus subtilis (strain 168)</name>
    <dbReference type="NCBI Taxonomy" id="224308"/>
    <lineage>
        <taxon>Bacteria</taxon>
        <taxon>Bacillati</taxon>
        <taxon>Bacillota</taxon>
        <taxon>Bacilli</taxon>
        <taxon>Bacillales</taxon>
        <taxon>Bacillaceae</taxon>
        <taxon>Bacillus</taxon>
    </lineage>
</organism>
<proteinExistence type="evidence at protein level"/>
<keyword id="KW-0067">ATP-binding</keyword>
<keyword id="KW-1003">Cell membrane</keyword>
<keyword id="KW-0472">Membrane</keyword>
<keyword id="KW-0547">Nucleotide-binding</keyword>
<keyword id="KW-1185">Reference proteome</keyword>
<keyword id="KW-0813">Transport</keyword>